<sequence>MRRYETIFIADPDLSPENQAQLFEKATTLIDANSGVLVEFDEWGTRRLAYEIRKKPRGHYVRLDFCGDGATVQGLENAFRIDERVLKFMTVFLSENADPEALRQAIAEEKEKKAEGQAAADAAPADGDDEAPKQPAPASDDDAPKQPETEAGSDETEAAAADKSDDNA</sequence>
<evidence type="ECO:0000255" key="1">
    <source>
        <dbReference type="HAMAP-Rule" id="MF_00360"/>
    </source>
</evidence>
<evidence type="ECO:0000256" key="2">
    <source>
        <dbReference type="SAM" id="MobiDB-lite"/>
    </source>
</evidence>
<evidence type="ECO:0000305" key="3"/>
<protein>
    <recommendedName>
        <fullName evidence="1">Small ribosomal subunit protein bS6</fullName>
    </recommendedName>
    <alternativeName>
        <fullName evidence="3">30S ribosomal protein S6</fullName>
    </alternativeName>
</protein>
<gene>
    <name evidence="1" type="primary">rpsF</name>
    <name type="ordered locus">Dole_0010</name>
</gene>
<organism>
    <name type="scientific">Desulfosudis oleivorans (strain DSM 6200 / JCM 39069 / Hxd3)</name>
    <name type="common">Desulfococcus oleovorans</name>
    <dbReference type="NCBI Taxonomy" id="96561"/>
    <lineage>
        <taxon>Bacteria</taxon>
        <taxon>Pseudomonadati</taxon>
        <taxon>Thermodesulfobacteriota</taxon>
        <taxon>Desulfobacteria</taxon>
        <taxon>Desulfobacterales</taxon>
        <taxon>Desulfosudaceae</taxon>
        <taxon>Desulfosudis</taxon>
    </lineage>
</organism>
<feature type="chain" id="PRO_1000120739" description="Small ribosomal subunit protein bS6">
    <location>
        <begin position="1"/>
        <end position="168"/>
    </location>
</feature>
<feature type="region of interest" description="Disordered" evidence="2">
    <location>
        <begin position="103"/>
        <end position="168"/>
    </location>
</feature>
<feature type="compositionally biased region" description="Basic and acidic residues" evidence="2">
    <location>
        <begin position="106"/>
        <end position="115"/>
    </location>
</feature>
<feature type="compositionally biased region" description="Low complexity" evidence="2">
    <location>
        <begin position="116"/>
        <end position="125"/>
    </location>
</feature>
<comment type="function">
    <text evidence="1">Binds together with bS18 to 16S ribosomal RNA.</text>
</comment>
<comment type="similarity">
    <text evidence="1">Belongs to the bacterial ribosomal protein bS6 family.</text>
</comment>
<proteinExistence type="inferred from homology"/>
<keyword id="KW-1185">Reference proteome</keyword>
<keyword id="KW-0687">Ribonucleoprotein</keyword>
<keyword id="KW-0689">Ribosomal protein</keyword>
<keyword id="KW-0694">RNA-binding</keyword>
<keyword id="KW-0699">rRNA-binding</keyword>
<dbReference type="EMBL" id="CP000859">
    <property type="protein sequence ID" value="ABW65820.1"/>
    <property type="molecule type" value="Genomic_DNA"/>
</dbReference>
<dbReference type="RefSeq" id="WP_012173439.1">
    <property type="nucleotide sequence ID" value="NC_009943.1"/>
</dbReference>
<dbReference type="SMR" id="A8ZRQ3"/>
<dbReference type="STRING" id="96561.Dole_0010"/>
<dbReference type="KEGG" id="dol:Dole_0010"/>
<dbReference type="eggNOG" id="COG0360">
    <property type="taxonomic scope" value="Bacteria"/>
</dbReference>
<dbReference type="HOGENOM" id="CLU_113441_4_0_7"/>
<dbReference type="OrthoDB" id="9812702at2"/>
<dbReference type="Proteomes" id="UP000008561">
    <property type="component" value="Chromosome"/>
</dbReference>
<dbReference type="GO" id="GO:0005737">
    <property type="term" value="C:cytoplasm"/>
    <property type="evidence" value="ECO:0007669"/>
    <property type="project" value="UniProtKB-ARBA"/>
</dbReference>
<dbReference type="GO" id="GO:1990904">
    <property type="term" value="C:ribonucleoprotein complex"/>
    <property type="evidence" value="ECO:0007669"/>
    <property type="project" value="UniProtKB-KW"/>
</dbReference>
<dbReference type="GO" id="GO:0005840">
    <property type="term" value="C:ribosome"/>
    <property type="evidence" value="ECO:0007669"/>
    <property type="project" value="UniProtKB-KW"/>
</dbReference>
<dbReference type="GO" id="GO:0070181">
    <property type="term" value="F:small ribosomal subunit rRNA binding"/>
    <property type="evidence" value="ECO:0007669"/>
    <property type="project" value="TreeGrafter"/>
</dbReference>
<dbReference type="GO" id="GO:0003735">
    <property type="term" value="F:structural constituent of ribosome"/>
    <property type="evidence" value="ECO:0007669"/>
    <property type="project" value="InterPro"/>
</dbReference>
<dbReference type="GO" id="GO:0006412">
    <property type="term" value="P:translation"/>
    <property type="evidence" value="ECO:0007669"/>
    <property type="project" value="UniProtKB-UniRule"/>
</dbReference>
<dbReference type="CDD" id="cd00473">
    <property type="entry name" value="bS6"/>
    <property type="match status" value="1"/>
</dbReference>
<dbReference type="Gene3D" id="3.30.70.60">
    <property type="match status" value="1"/>
</dbReference>
<dbReference type="HAMAP" id="MF_00360">
    <property type="entry name" value="Ribosomal_bS6"/>
    <property type="match status" value="1"/>
</dbReference>
<dbReference type="InterPro" id="IPR000529">
    <property type="entry name" value="Ribosomal_bS6"/>
</dbReference>
<dbReference type="InterPro" id="IPR020815">
    <property type="entry name" value="Ribosomal_bS6_CS"/>
</dbReference>
<dbReference type="InterPro" id="IPR035980">
    <property type="entry name" value="Ribosomal_bS6_sf"/>
</dbReference>
<dbReference type="InterPro" id="IPR020814">
    <property type="entry name" value="Ribosomal_S6_plastid/chlpt"/>
</dbReference>
<dbReference type="InterPro" id="IPR014717">
    <property type="entry name" value="Transl_elong_EF1B/ribsomal_bS6"/>
</dbReference>
<dbReference type="NCBIfam" id="TIGR00166">
    <property type="entry name" value="S6"/>
    <property type="match status" value="1"/>
</dbReference>
<dbReference type="PANTHER" id="PTHR21011">
    <property type="entry name" value="MITOCHONDRIAL 28S RIBOSOMAL PROTEIN S6"/>
    <property type="match status" value="1"/>
</dbReference>
<dbReference type="PANTHER" id="PTHR21011:SF1">
    <property type="entry name" value="SMALL RIBOSOMAL SUBUNIT PROTEIN BS6M"/>
    <property type="match status" value="1"/>
</dbReference>
<dbReference type="Pfam" id="PF01250">
    <property type="entry name" value="Ribosomal_S6"/>
    <property type="match status" value="1"/>
</dbReference>
<dbReference type="SUPFAM" id="SSF54995">
    <property type="entry name" value="Ribosomal protein S6"/>
    <property type="match status" value="1"/>
</dbReference>
<dbReference type="PROSITE" id="PS01048">
    <property type="entry name" value="RIBOSOMAL_S6"/>
    <property type="match status" value="1"/>
</dbReference>
<reference key="1">
    <citation type="submission" date="2007-10" db="EMBL/GenBank/DDBJ databases">
        <title>Complete sequence of Desulfococcus oleovorans Hxd3.</title>
        <authorList>
            <consortium name="US DOE Joint Genome Institute"/>
            <person name="Copeland A."/>
            <person name="Lucas S."/>
            <person name="Lapidus A."/>
            <person name="Barry K."/>
            <person name="Glavina del Rio T."/>
            <person name="Dalin E."/>
            <person name="Tice H."/>
            <person name="Pitluck S."/>
            <person name="Kiss H."/>
            <person name="Brettin T."/>
            <person name="Bruce D."/>
            <person name="Detter J.C."/>
            <person name="Han C."/>
            <person name="Schmutz J."/>
            <person name="Larimer F."/>
            <person name="Land M."/>
            <person name="Hauser L."/>
            <person name="Kyrpides N."/>
            <person name="Kim E."/>
            <person name="Wawrik B."/>
            <person name="Richardson P."/>
        </authorList>
    </citation>
    <scope>NUCLEOTIDE SEQUENCE [LARGE SCALE GENOMIC DNA]</scope>
    <source>
        <strain>DSM 6200 / JCM 39069 / Hxd3</strain>
    </source>
</reference>
<name>RS6_DESOH</name>
<accession>A8ZRQ3</accession>